<dbReference type="EC" id="2.7.7.77" evidence="1"/>
<dbReference type="EMBL" id="CP000814">
    <property type="protein sequence ID" value="ABV52865.1"/>
    <property type="molecule type" value="Genomic_DNA"/>
</dbReference>
<dbReference type="RefSeq" id="WP_002866768.1">
    <property type="nucleotide sequence ID" value="NC_009839.1"/>
</dbReference>
<dbReference type="SMR" id="A8FN28"/>
<dbReference type="KEGG" id="cju:C8J_1266"/>
<dbReference type="HOGENOM" id="CLU_055597_2_2_7"/>
<dbReference type="GO" id="GO:0005737">
    <property type="term" value="C:cytoplasm"/>
    <property type="evidence" value="ECO:0007669"/>
    <property type="project" value="UniProtKB-SubCell"/>
</dbReference>
<dbReference type="GO" id="GO:0005525">
    <property type="term" value="F:GTP binding"/>
    <property type="evidence" value="ECO:0007669"/>
    <property type="project" value="UniProtKB-UniRule"/>
</dbReference>
<dbReference type="GO" id="GO:0046872">
    <property type="term" value="F:metal ion binding"/>
    <property type="evidence" value="ECO:0007669"/>
    <property type="project" value="UniProtKB-KW"/>
</dbReference>
<dbReference type="GO" id="GO:0061603">
    <property type="term" value="F:molybdenum cofactor guanylyltransferase activity"/>
    <property type="evidence" value="ECO:0007669"/>
    <property type="project" value="UniProtKB-EC"/>
</dbReference>
<dbReference type="GO" id="GO:1902758">
    <property type="term" value="P:bis(molybdopterin guanine dinucleotide)molybdenum biosynthetic process"/>
    <property type="evidence" value="ECO:0007669"/>
    <property type="project" value="TreeGrafter"/>
</dbReference>
<dbReference type="CDD" id="cd02503">
    <property type="entry name" value="MobA"/>
    <property type="match status" value="1"/>
</dbReference>
<dbReference type="FunFam" id="3.90.550.10:FF:000199">
    <property type="entry name" value="Molybdenum cofactor guanylyltransferase"/>
    <property type="match status" value="1"/>
</dbReference>
<dbReference type="Gene3D" id="3.90.550.10">
    <property type="entry name" value="Spore Coat Polysaccharide Biosynthesis Protein SpsA, Chain A"/>
    <property type="match status" value="1"/>
</dbReference>
<dbReference type="HAMAP" id="MF_00316">
    <property type="entry name" value="MobA"/>
    <property type="match status" value="1"/>
</dbReference>
<dbReference type="InterPro" id="IPR025877">
    <property type="entry name" value="MobA-like_NTP_Trfase"/>
</dbReference>
<dbReference type="InterPro" id="IPR013482">
    <property type="entry name" value="Molybde_CF_guanTrfase"/>
</dbReference>
<dbReference type="InterPro" id="IPR029044">
    <property type="entry name" value="Nucleotide-diphossugar_trans"/>
</dbReference>
<dbReference type="PANTHER" id="PTHR19136">
    <property type="entry name" value="MOLYBDENUM COFACTOR GUANYLYLTRANSFERASE"/>
    <property type="match status" value="1"/>
</dbReference>
<dbReference type="PANTHER" id="PTHR19136:SF81">
    <property type="entry name" value="MOLYBDENUM COFACTOR GUANYLYLTRANSFERASE"/>
    <property type="match status" value="1"/>
</dbReference>
<dbReference type="Pfam" id="PF12804">
    <property type="entry name" value="NTP_transf_3"/>
    <property type="match status" value="1"/>
</dbReference>
<dbReference type="SUPFAM" id="SSF53448">
    <property type="entry name" value="Nucleotide-diphospho-sugar transferases"/>
    <property type="match status" value="1"/>
</dbReference>
<gene>
    <name evidence="1" type="primary">mobA</name>
    <name type="ordered locus">C8J_1266</name>
</gene>
<keyword id="KW-0963">Cytoplasm</keyword>
<keyword id="KW-0342">GTP-binding</keyword>
<keyword id="KW-0460">Magnesium</keyword>
<keyword id="KW-0479">Metal-binding</keyword>
<keyword id="KW-0501">Molybdenum cofactor biosynthesis</keyword>
<keyword id="KW-0547">Nucleotide-binding</keyword>
<keyword id="KW-0808">Transferase</keyword>
<sequence>MQLNELNCVILCGGKSSRMGQDKSKLILKNQNLTQFQVEKFSKIFKNVYVSAKEDKFENHFSLIKDSLEFEVYSPMLALYSILSNFKNEFVFVLSVDSPKVGENELLKMLPFLEQNYKIIIAKTPLHKHPLCGFYHSSLAQTCKNFLEKNEQKIGLLFSEIKTKFVEFEDEDAFLNLNFYEEYEKFKSELR</sequence>
<reference key="1">
    <citation type="journal article" date="2007" name="J. Bacteriol.">
        <title>The complete genome sequence of Campylobacter jejuni strain 81116 (NCTC11828).</title>
        <authorList>
            <person name="Pearson B.M."/>
            <person name="Gaskin D.J.H."/>
            <person name="Segers R.P.A.M."/>
            <person name="Wells J.M."/>
            <person name="Nuijten P.J.M."/>
            <person name="van Vliet A.H.M."/>
        </authorList>
    </citation>
    <scope>NUCLEOTIDE SEQUENCE [LARGE SCALE GENOMIC DNA]</scope>
    <source>
        <strain>81116 / NCTC 11828</strain>
    </source>
</reference>
<feature type="chain" id="PRO_1000071999" description="Molybdenum cofactor guanylyltransferase">
    <location>
        <begin position="1"/>
        <end position="191"/>
    </location>
</feature>
<feature type="binding site" evidence="1">
    <location>
        <begin position="11"/>
        <end position="13"/>
    </location>
    <ligand>
        <name>GTP</name>
        <dbReference type="ChEBI" id="CHEBI:37565"/>
    </ligand>
</feature>
<feature type="binding site" evidence="1">
    <location>
        <position position="23"/>
    </location>
    <ligand>
        <name>GTP</name>
        <dbReference type="ChEBI" id="CHEBI:37565"/>
    </ligand>
</feature>
<feature type="binding site" evidence="1">
    <location>
        <position position="66"/>
    </location>
    <ligand>
        <name>GTP</name>
        <dbReference type="ChEBI" id="CHEBI:37565"/>
    </ligand>
</feature>
<feature type="binding site" evidence="1">
    <location>
        <position position="97"/>
    </location>
    <ligand>
        <name>GTP</name>
        <dbReference type="ChEBI" id="CHEBI:37565"/>
    </ligand>
</feature>
<feature type="binding site" evidence="1">
    <location>
        <position position="97"/>
    </location>
    <ligand>
        <name>Mg(2+)</name>
        <dbReference type="ChEBI" id="CHEBI:18420"/>
    </ligand>
</feature>
<organism>
    <name type="scientific">Campylobacter jejuni subsp. jejuni serotype O:6 (strain 81116 / NCTC 11828)</name>
    <dbReference type="NCBI Taxonomy" id="407148"/>
    <lineage>
        <taxon>Bacteria</taxon>
        <taxon>Pseudomonadati</taxon>
        <taxon>Campylobacterota</taxon>
        <taxon>Epsilonproteobacteria</taxon>
        <taxon>Campylobacterales</taxon>
        <taxon>Campylobacteraceae</taxon>
        <taxon>Campylobacter</taxon>
    </lineage>
</organism>
<comment type="function">
    <text evidence="1">Transfers a GMP moiety from GTP to Mo-molybdopterin (Mo-MPT) cofactor (Moco or molybdenum cofactor) to form Mo-molybdopterin guanine dinucleotide (Mo-MGD) cofactor.</text>
</comment>
<comment type="catalytic activity">
    <reaction evidence="1">
        <text>Mo-molybdopterin + GTP + H(+) = Mo-molybdopterin guanine dinucleotide + diphosphate</text>
        <dbReference type="Rhea" id="RHEA:34243"/>
        <dbReference type="ChEBI" id="CHEBI:15378"/>
        <dbReference type="ChEBI" id="CHEBI:33019"/>
        <dbReference type="ChEBI" id="CHEBI:37565"/>
        <dbReference type="ChEBI" id="CHEBI:71302"/>
        <dbReference type="ChEBI" id="CHEBI:71310"/>
        <dbReference type="EC" id="2.7.7.77"/>
    </reaction>
</comment>
<comment type="cofactor">
    <cofactor evidence="1">
        <name>Mg(2+)</name>
        <dbReference type="ChEBI" id="CHEBI:18420"/>
    </cofactor>
</comment>
<comment type="subunit">
    <text evidence="1">Monomer.</text>
</comment>
<comment type="subcellular location">
    <subcellularLocation>
        <location evidence="1">Cytoplasm</location>
    </subcellularLocation>
</comment>
<comment type="domain">
    <text evidence="1">The N-terminal domain determines nucleotide recognition and specific binding, while the C-terminal domain determines the specific binding to the target protein.</text>
</comment>
<comment type="similarity">
    <text evidence="1">Belongs to the MobA family.</text>
</comment>
<accession>A8FN28</accession>
<evidence type="ECO:0000255" key="1">
    <source>
        <dbReference type="HAMAP-Rule" id="MF_00316"/>
    </source>
</evidence>
<protein>
    <recommendedName>
        <fullName evidence="1">Molybdenum cofactor guanylyltransferase</fullName>
        <shortName evidence="1">MoCo guanylyltransferase</shortName>
        <ecNumber evidence="1">2.7.7.77</ecNumber>
    </recommendedName>
    <alternativeName>
        <fullName evidence="1">GTP:molybdopterin guanylyltransferase</fullName>
    </alternativeName>
    <alternativeName>
        <fullName evidence="1">Mo-MPT guanylyltransferase</fullName>
    </alternativeName>
    <alternativeName>
        <fullName evidence="1">Molybdopterin guanylyltransferase</fullName>
    </alternativeName>
    <alternativeName>
        <fullName evidence="1">Molybdopterin-guanine dinucleotide synthase</fullName>
        <shortName evidence="1">MGD synthase</shortName>
    </alternativeName>
</protein>
<name>MOBA_CAMJ8</name>
<proteinExistence type="inferred from homology"/>